<feature type="chain" id="PRO_0000432864" description="Epithelial sodium channel subunit gamma">
    <location>
        <begin position="1"/>
        <end position="669"/>
    </location>
</feature>
<feature type="topological domain" description="Cytoplasmic" evidence="1">
    <location>
        <begin position="1"/>
        <end position="67"/>
    </location>
</feature>
<feature type="transmembrane region" description="Helical; Name=1" evidence="2">
    <location>
        <begin position="68"/>
        <end position="88"/>
    </location>
</feature>
<feature type="topological domain" description="Extracellular" evidence="1">
    <location>
        <begin position="89"/>
        <end position="551"/>
    </location>
</feature>
<feature type="transmembrane region" description="Helical; Name=2" evidence="2">
    <location>
        <begin position="552"/>
        <end position="572"/>
    </location>
</feature>
<feature type="topological domain" description="Cytoplasmic" evidence="1">
    <location>
        <begin position="573"/>
        <end position="669"/>
    </location>
</feature>
<feature type="region of interest" description="Disordered" evidence="3">
    <location>
        <begin position="592"/>
        <end position="619"/>
    </location>
</feature>
<feature type="disulfide bond" evidence="1">
    <location>
        <begin position="113"/>
        <end position="300"/>
    </location>
</feature>
<feature type="disulfide bond" evidence="1">
    <location>
        <begin position="223"/>
        <end position="231"/>
    </location>
</feature>
<feature type="disulfide bond" evidence="1">
    <location>
        <begin position="277"/>
        <end position="284"/>
    </location>
</feature>
<feature type="disulfide bond" evidence="1">
    <location>
        <begin position="389"/>
        <end position="474"/>
    </location>
</feature>
<feature type="disulfide bond" evidence="1">
    <location>
        <begin position="411"/>
        <end position="470"/>
    </location>
</feature>
<feature type="disulfide bond" evidence="1">
    <location>
        <begin position="415"/>
        <end position="466"/>
    </location>
</feature>
<feature type="disulfide bond" evidence="1">
    <location>
        <begin position="424"/>
        <end position="451"/>
    </location>
</feature>
<feature type="disulfide bond" evidence="1">
    <location>
        <begin position="426"/>
        <end position="440"/>
    </location>
</feature>
<accession>K7FSQ4</accession>
<sequence length="669" mass="76220">MAPPYHGDTREFSMAPAKKIKAKIKKTLPVTGPQAPTVSELMHWYCMNTNTHGCRRIVVSRGRLRKFIWILLTLSAVGLILWQCAELIMSYYTASVSVTVQFQKLPFPAVTICNINPYKYSAMKEHLSELDKETKNALETLYGFSEGKSKVRRDAADWNSTGRNMQSKLLEKIPLLKFDDLFKKTATEILSGHKRKIEGSAFHQGSSMVNIGEPQDVVGFQLCDPNNSSDCAVYIFSSGVNAIQEWYKLHYMNIMAQIPLEMKVNMGYSAEDLLLTCFFDGISCDSRNFTPFHHPLYGNCYTFNSGENGTILTTSTGGSEYGLQVVLYVEEADYNPFLVTSTGAKIIVHDQDEYPFIEDIGTEIETAMATSIGMHFTRSHKLSQPYSDCTETGNDIPVANLYNKSYSLQICLHSCFQRAMVDTCGCAQYAQPLPPGAEYCNYKKYPNWMYCYYKLHEKFVKEQLGCQQICKESCSFKEWTLTTSLAQWPSSVSEDWMLRVLSWDKRQKINKMLNKTDLANLVVFYKDLNERFISENPANNLVILLSNFGGQLGLWMSCSMVCVIEIIEVFFIDSFSIVMRRRWQKMKKWWNDRKAPRPQEPPQVNAPAKEGHDNPVCTDEDLPTFNTALRLPLPQENHMPRTPPPNYSTLQLNAAFTDQLPDTLEGRSH</sequence>
<protein>
    <recommendedName>
        <fullName evidence="1">Epithelial sodium channel subunit gamma</fullName>
    </recommendedName>
    <alternativeName>
        <fullName evidence="1">Amiloride-sensitive sodium channel subunit gamma</fullName>
    </alternativeName>
</protein>
<dbReference type="EMBL" id="AGCU01105104">
    <property type="status" value="NOT_ANNOTATED_CDS"/>
    <property type="molecule type" value="Genomic_DNA"/>
</dbReference>
<dbReference type="EMBL" id="AGCU01105105">
    <property type="status" value="NOT_ANNOTATED_CDS"/>
    <property type="molecule type" value="Genomic_DNA"/>
</dbReference>
<dbReference type="EMBL" id="AGCU01105106">
    <property type="status" value="NOT_ANNOTATED_CDS"/>
    <property type="molecule type" value="Genomic_DNA"/>
</dbReference>
<dbReference type="RefSeq" id="XP_006125866.1">
    <property type="nucleotide sequence ID" value="XM_006125804.2"/>
</dbReference>
<dbReference type="SMR" id="K7FSQ4"/>
<dbReference type="STRING" id="13735.ENSPSIP00000011064"/>
<dbReference type="Ensembl" id="ENSPSIT00000011120.1">
    <property type="protein sequence ID" value="ENSPSIP00000011064.1"/>
    <property type="gene ID" value="ENSPSIG00000010028.1"/>
</dbReference>
<dbReference type="GeneID" id="102447008"/>
<dbReference type="KEGG" id="pss:102447008"/>
<dbReference type="CTD" id="6340"/>
<dbReference type="eggNOG" id="KOG4294">
    <property type="taxonomic scope" value="Eukaryota"/>
</dbReference>
<dbReference type="GeneTree" id="ENSGT00940000160352"/>
<dbReference type="HOGENOM" id="CLU_020415_0_0_1"/>
<dbReference type="OMA" id="KKYPNWM"/>
<dbReference type="OrthoDB" id="6021021at2759"/>
<dbReference type="TreeFam" id="TF330663"/>
<dbReference type="Proteomes" id="UP000007267">
    <property type="component" value="Unassembled WGS sequence"/>
</dbReference>
<dbReference type="GO" id="GO:0016324">
    <property type="term" value="C:apical plasma membrane"/>
    <property type="evidence" value="ECO:0000250"/>
    <property type="project" value="UniProtKB"/>
</dbReference>
<dbReference type="GO" id="GO:0009897">
    <property type="term" value="C:external side of plasma membrane"/>
    <property type="evidence" value="ECO:0007669"/>
    <property type="project" value="Ensembl"/>
</dbReference>
<dbReference type="GO" id="GO:0070062">
    <property type="term" value="C:extracellular exosome"/>
    <property type="evidence" value="ECO:0007669"/>
    <property type="project" value="Ensembl"/>
</dbReference>
<dbReference type="GO" id="GO:0005654">
    <property type="term" value="C:nucleoplasm"/>
    <property type="evidence" value="ECO:0007669"/>
    <property type="project" value="Ensembl"/>
</dbReference>
<dbReference type="GO" id="GO:0034706">
    <property type="term" value="C:sodium channel complex"/>
    <property type="evidence" value="ECO:0007669"/>
    <property type="project" value="Ensembl"/>
</dbReference>
<dbReference type="GO" id="GO:0015280">
    <property type="term" value="F:ligand-gated sodium channel activity"/>
    <property type="evidence" value="ECO:0007669"/>
    <property type="project" value="Ensembl"/>
</dbReference>
<dbReference type="GO" id="GO:0050699">
    <property type="term" value="F:WW domain binding"/>
    <property type="evidence" value="ECO:0007669"/>
    <property type="project" value="Ensembl"/>
</dbReference>
<dbReference type="GO" id="GO:0071468">
    <property type="term" value="P:cellular response to acidic pH"/>
    <property type="evidence" value="ECO:0007669"/>
    <property type="project" value="Ensembl"/>
</dbReference>
<dbReference type="GO" id="GO:1904045">
    <property type="term" value="P:cellular response to aldosterone"/>
    <property type="evidence" value="ECO:0007669"/>
    <property type="project" value="Ensembl"/>
</dbReference>
<dbReference type="GO" id="GO:0006883">
    <property type="term" value="P:intracellular sodium ion homeostasis"/>
    <property type="evidence" value="ECO:0007669"/>
    <property type="project" value="Ensembl"/>
</dbReference>
<dbReference type="GO" id="GO:0050891">
    <property type="term" value="P:multicellular organismal-level water homeostasis"/>
    <property type="evidence" value="ECO:0007669"/>
    <property type="project" value="Ensembl"/>
</dbReference>
<dbReference type="GO" id="GO:0098719">
    <property type="term" value="P:sodium ion import across plasma membrane"/>
    <property type="evidence" value="ECO:0007669"/>
    <property type="project" value="Ensembl"/>
</dbReference>
<dbReference type="GO" id="GO:0035725">
    <property type="term" value="P:sodium ion transmembrane transport"/>
    <property type="evidence" value="ECO:0000250"/>
    <property type="project" value="UniProtKB"/>
</dbReference>
<dbReference type="FunFam" id="1.10.287.770:FF:000005">
    <property type="entry name" value="Amiloride-sensitive sodium channel subunit gamma"/>
    <property type="match status" value="1"/>
</dbReference>
<dbReference type="FunFam" id="2.60.470.10:FF:000005">
    <property type="entry name" value="Amiloride-sensitive sodium channel subunit gamma"/>
    <property type="match status" value="1"/>
</dbReference>
<dbReference type="Gene3D" id="2.60.470.10">
    <property type="entry name" value="Acid-sensing ion channels like domains"/>
    <property type="match status" value="1"/>
</dbReference>
<dbReference type="InterPro" id="IPR001873">
    <property type="entry name" value="ENaC"/>
</dbReference>
<dbReference type="InterPro" id="IPR004724">
    <property type="entry name" value="ENaC_chordates"/>
</dbReference>
<dbReference type="InterPro" id="IPR020903">
    <property type="entry name" value="ENaC_CS"/>
</dbReference>
<dbReference type="NCBIfam" id="TIGR00859">
    <property type="entry name" value="ENaC"/>
    <property type="match status" value="1"/>
</dbReference>
<dbReference type="PANTHER" id="PTHR11690:SF19">
    <property type="entry name" value="AMILORIDE-SENSITIVE SODIUM CHANNEL SUBUNIT GAMMA"/>
    <property type="match status" value="1"/>
</dbReference>
<dbReference type="PANTHER" id="PTHR11690">
    <property type="entry name" value="AMILORIDE-SENSITIVE SODIUM CHANNEL-RELATED"/>
    <property type="match status" value="1"/>
</dbReference>
<dbReference type="Pfam" id="PF00858">
    <property type="entry name" value="ASC"/>
    <property type="match status" value="1"/>
</dbReference>
<dbReference type="PRINTS" id="PR01078">
    <property type="entry name" value="AMINACHANNEL"/>
</dbReference>
<dbReference type="PROSITE" id="PS01206">
    <property type="entry name" value="ASC"/>
    <property type="match status" value="1"/>
</dbReference>
<comment type="function">
    <text evidence="1">This is one of the three pore-forming subunits of the heterotrimeric epithelial sodium channel (ENaC), a critical regulator of sodium balance and fluid homeostasis. ENaC operates in epithelial tissues, where it mediates the electrodiffusion of sodium ions from extracellular fluid through the apical membrane of cells, with water following osmotically.</text>
</comment>
<comment type="catalytic activity">
    <reaction evidence="1">
        <text>Na(+)(in) = Na(+)(out)</text>
        <dbReference type="Rhea" id="RHEA:34963"/>
        <dbReference type="ChEBI" id="CHEBI:29101"/>
    </reaction>
</comment>
<comment type="activity regulation">
    <text evidence="1">Originally identified and characterized by its inhibition by the diuretic drug amiloride.</text>
</comment>
<comment type="subunit">
    <text evidence="1">Component of the heterotrimeric epithelial sodium channel (ENaC) composed of an alpha/SCNN1A, a beta/SCNN1B and a gamma/SCNN1G subunit.</text>
</comment>
<comment type="subcellular location">
    <subcellularLocation>
        <location evidence="1">Apical cell membrane</location>
        <topology evidence="1">Multi-pass membrane protein</topology>
    </subcellularLocation>
</comment>
<comment type="similarity">
    <text evidence="4">Belongs to the amiloride-sensitive sodium channel (TC 1.A.6) family. SCNN1G subfamily.</text>
</comment>
<reference key="1">
    <citation type="submission" date="2011-10" db="EMBL/GenBank/DDBJ databases">
        <authorList>
            <consortium name="Soft-shell Turtle Genome Consortium"/>
        </authorList>
    </citation>
    <scope>NUCLEOTIDE SEQUENCE [LARGE SCALE GENOMIC DNA]</scope>
</reference>
<gene>
    <name evidence="1" type="primary">SCNN1G</name>
</gene>
<organism>
    <name type="scientific">Pelodiscus sinensis</name>
    <name type="common">Chinese softshell turtle</name>
    <name type="synonym">Trionyx sinensis</name>
    <dbReference type="NCBI Taxonomy" id="13735"/>
    <lineage>
        <taxon>Eukaryota</taxon>
        <taxon>Metazoa</taxon>
        <taxon>Chordata</taxon>
        <taxon>Craniata</taxon>
        <taxon>Vertebrata</taxon>
        <taxon>Euteleostomi</taxon>
        <taxon>Archelosauria</taxon>
        <taxon>Testudinata</taxon>
        <taxon>Testudines</taxon>
        <taxon>Cryptodira</taxon>
        <taxon>Trionychia</taxon>
        <taxon>Trionychidae</taxon>
        <taxon>Pelodiscus</taxon>
    </lineage>
</organism>
<name>SCNNG_PELSI</name>
<keyword id="KW-1003">Cell membrane</keyword>
<keyword id="KW-1015">Disulfide bond</keyword>
<keyword id="KW-0407">Ion channel</keyword>
<keyword id="KW-0406">Ion transport</keyword>
<keyword id="KW-0472">Membrane</keyword>
<keyword id="KW-1185">Reference proteome</keyword>
<keyword id="KW-0915">Sodium</keyword>
<keyword id="KW-0894">Sodium channel</keyword>
<keyword id="KW-0739">Sodium transport</keyword>
<keyword id="KW-0812">Transmembrane</keyword>
<keyword id="KW-1133">Transmembrane helix</keyword>
<keyword id="KW-0813">Transport</keyword>
<proteinExistence type="inferred from homology"/>
<evidence type="ECO:0000250" key="1">
    <source>
        <dbReference type="UniProtKB" id="P51170"/>
    </source>
</evidence>
<evidence type="ECO:0000255" key="2"/>
<evidence type="ECO:0000256" key="3">
    <source>
        <dbReference type="SAM" id="MobiDB-lite"/>
    </source>
</evidence>
<evidence type="ECO:0000305" key="4"/>